<sequence length="180" mass="19647">MSRIGNRLLQIPNGVEVKIAENNLVTITGSKGTLSKQFSPLIKIEVEENKLITKRLNEQKHTKQLHGTTNSLLQGMLTGVSEGFKKELQITGVGYKAAVNGSKLNLSLGYSHPVEFEIPDGVVIQAVKPTELAITGIDKQLVGQVAANIRAYRKPEPYKGKGIKYKNETIIRKEGKAAGK</sequence>
<protein>
    <recommendedName>
        <fullName evidence="1">Large ribosomal subunit protein uL6</fullName>
    </recommendedName>
    <alternativeName>
        <fullName evidence="2">50S ribosomal protein L6</fullName>
    </alternativeName>
</protein>
<feature type="chain" id="PRO_0000131057" description="Large ribosomal subunit protein uL6">
    <location>
        <begin position="1"/>
        <end position="180"/>
    </location>
</feature>
<name>RL6_MYCCT</name>
<evidence type="ECO:0000255" key="1">
    <source>
        <dbReference type="HAMAP-Rule" id="MF_01365"/>
    </source>
</evidence>
<evidence type="ECO:0000305" key="2"/>
<keyword id="KW-0687">Ribonucleoprotein</keyword>
<keyword id="KW-0689">Ribosomal protein</keyword>
<keyword id="KW-0694">RNA-binding</keyword>
<keyword id="KW-0699">rRNA-binding</keyword>
<dbReference type="EMBL" id="X06414">
    <property type="protein sequence ID" value="CAA29719.1"/>
    <property type="molecule type" value="Genomic_DNA"/>
</dbReference>
<dbReference type="EMBL" id="X01121">
    <property type="protein sequence ID" value="CAA25588.1"/>
    <property type="molecule type" value="Genomic_DNA"/>
</dbReference>
<dbReference type="EMBL" id="CP000123">
    <property type="protein sequence ID" value="ABC01554.1"/>
    <property type="molecule type" value="Genomic_DNA"/>
</dbReference>
<dbReference type="EMBL" id="Z33291">
    <property type="protein sequence ID" value="CAA83827.1"/>
    <property type="molecule type" value="Genomic_DNA"/>
</dbReference>
<dbReference type="PIR" id="S02846">
    <property type="entry name" value="R5YM6"/>
</dbReference>
<dbReference type="RefSeq" id="WP_011387536.1">
    <property type="nucleotide sequence ID" value="NC_007633.1"/>
</dbReference>
<dbReference type="SMR" id="P04448"/>
<dbReference type="GeneID" id="23778365"/>
<dbReference type="KEGG" id="mcp:MCAP_0681"/>
<dbReference type="HOGENOM" id="CLU_065464_1_2_14"/>
<dbReference type="PhylomeDB" id="P04448"/>
<dbReference type="Proteomes" id="UP000001928">
    <property type="component" value="Chromosome"/>
</dbReference>
<dbReference type="GO" id="GO:0022625">
    <property type="term" value="C:cytosolic large ribosomal subunit"/>
    <property type="evidence" value="ECO:0007669"/>
    <property type="project" value="TreeGrafter"/>
</dbReference>
<dbReference type="GO" id="GO:0019843">
    <property type="term" value="F:rRNA binding"/>
    <property type="evidence" value="ECO:0007669"/>
    <property type="project" value="UniProtKB-UniRule"/>
</dbReference>
<dbReference type="GO" id="GO:0003735">
    <property type="term" value="F:structural constituent of ribosome"/>
    <property type="evidence" value="ECO:0007669"/>
    <property type="project" value="InterPro"/>
</dbReference>
<dbReference type="GO" id="GO:0002181">
    <property type="term" value="P:cytoplasmic translation"/>
    <property type="evidence" value="ECO:0007669"/>
    <property type="project" value="TreeGrafter"/>
</dbReference>
<dbReference type="FunFam" id="3.90.930.12:FF:000001">
    <property type="entry name" value="50S ribosomal protein L6"/>
    <property type="match status" value="1"/>
</dbReference>
<dbReference type="Gene3D" id="3.90.930.12">
    <property type="entry name" value="Ribosomal protein L6, alpha-beta domain"/>
    <property type="match status" value="2"/>
</dbReference>
<dbReference type="HAMAP" id="MF_01365_B">
    <property type="entry name" value="Ribosomal_uL6_B"/>
    <property type="match status" value="1"/>
</dbReference>
<dbReference type="InterPro" id="IPR000702">
    <property type="entry name" value="Ribosomal_uL6-like"/>
</dbReference>
<dbReference type="InterPro" id="IPR036789">
    <property type="entry name" value="Ribosomal_uL6-like_a/b-dom_sf"/>
</dbReference>
<dbReference type="InterPro" id="IPR020040">
    <property type="entry name" value="Ribosomal_uL6_a/b-dom"/>
</dbReference>
<dbReference type="InterPro" id="IPR019906">
    <property type="entry name" value="Ribosomal_uL6_bac-type"/>
</dbReference>
<dbReference type="InterPro" id="IPR002358">
    <property type="entry name" value="Ribosomal_uL6_CS"/>
</dbReference>
<dbReference type="NCBIfam" id="TIGR03654">
    <property type="entry name" value="L6_bact"/>
    <property type="match status" value="1"/>
</dbReference>
<dbReference type="PANTHER" id="PTHR11655">
    <property type="entry name" value="60S/50S RIBOSOMAL PROTEIN L6/L9"/>
    <property type="match status" value="1"/>
</dbReference>
<dbReference type="PANTHER" id="PTHR11655:SF14">
    <property type="entry name" value="LARGE RIBOSOMAL SUBUNIT PROTEIN UL6M"/>
    <property type="match status" value="1"/>
</dbReference>
<dbReference type="Pfam" id="PF00347">
    <property type="entry name" value="Ribosomal_L6"/>
    <property type="match status" value="2"/>
</dbReference>
<dbReference type="PIRSF" id="PIRSF002162">
    <property type="entry name" value="Ribosomal_L6"/>
    <property type="match status" value="1"/>
</dbReference>
<dbReference type="PRINTS" id="PR00059">
    <property type="entry name" value="RIBOSOMALL6"/>
</dbReference>
<dbReference type="SUPFAM" id="SSF56053">
    <property type="entry name" value="Ribosomal protein L6"/>
    <property type="match status" value="2"/>
</dbReference>
<dbReference type="PROSITE" id="PS00525">
    <property type="entry name" value="RIBOSOMAL_L6_1"/>
    <property type="match status" value="1"/>
</dbReference>
<proteinExistence type="inferred from homology"/>
<accession>P04448</accession>
<accession>Q2SRG8</accession>
<accession>Q49075</accession>
<reference key="1">
    <citation type="journal article" date="1987" name="Mol. Gen. Genet.">
        <title>The ribosomal protein gene cluster of Mycoplasma capricolum.</title>
        <authorList>
            <person name="Ohkubo S."/>
            <person name="Muto A."/>
            <person name="Kawauchi Y."/>
            <person name="Yamao F."/>
            <person name="Osawa S."/>
        </authorList>
    </citation>
    <scope>NUCLEOTIDE SEQUENCE [GENOMIC DNA]</scope>
</reference>
<reference key="2">
    <citation type="journal article" date="1984" name="Nucleic Acids Res.">
        <title>Preferential use of A- and U-rich codons for Mycoplasma capricolum ribosomal proteins S8 and L6.</title>
        <authorList>
            <person name="Muto A."/>
            <person name="Kawauchi Y."/>
            <person name="Yamao F."/>
            <person name="Osawa S."/>
        </authorList>
    </citation>
    <scope>NUCLEOTIDE SEQUENCE [GENOMIC DNA]</scope>
</reference>
<reference key="3">
    <citation type="submission" date="2005-09" db="EMBL/GenBank/DDBJ databases">
        <authorList>
            <person name="Glass J.I."/>
            <person name="Lartigue C."/>
            <person name="Pfannkoch C."/>
            <person name="Baden-Tillson H."/>
            <person name="Smith H.O."/>
            <person name="Venter J.C."/>
            <person name="Roske K."/>
            <person name="Wise K.S."/>
            <person name="Calcutt M.J."/>
            <person name="Nelson W.C."/>
            <person name="Nierman W.C."/>
        </authorList>
    </citation>
    <scope>NUCLEOTIDE SEQUENCE [LARGE SCALE GENOMIC DNA]</scope>
    <source>
        <strain>California kid / ATCC 27343 / NCTC 10154</strain>
    </source>
</reference>
<reference key="4">
    <citation type="journal article" date="1995" name="Mol. Microbiol.">
        <title>Exploring the Mycoplasma capricolum genome: a minimal cell reveals its physiology.</title>
        <authorList>
            <person name="Bork P."/>
            <person name="Ouzounis C."/>
            <person name="Casari G."/>
            <person name="Schneider R."/>
            <person name="Sander C."/>
            <person name="Dolan M."/>
            <person name="Gilbert W."/>
            <person name="Gillevet P.M."/>
        </authorList>
    </citation>
    <scope>NUCLEOTIDE SEQUENCE [GENOMIC DNA] OF 76-127</scope>
</reference>
<comment type="function">
    <text evidence="1">This protein binds to the 23S rRNA, and is important in its secondary structure. It is located near the subunit interface in the base of the L7/L12 stalk, and near the tRNA binding site of the peptidyltransferase center.</text>
</comment>
<comment type="subunit">
    <text evidence="1">Part of the 50S ribosomal subunit.</text>
</comment>
<comment type="similarity">
    <text evidence="1">Belongs to the universal ribosomal protein uL6 family.</text>
</comment>
<organism>
    <name type="scientific">Mycoplasma capricolum subsp. capricolum (strain California kid / ATCC 27343 / NCTC 10154)</name>
    <dbReference type="NCBI Taxonomy" id="340047"/>
    <lineage>
        <taxon>Bacteria</taxon>
        <taxon>Bacillati</taxon>
        <taxon>Mycoplasmatota</taxon>
        <taxon>Mollicutes</taxon>
        <taxon>Mycoplasmataceae</taxon>
        <taxon>Mycoplasma</taxon>
    </lineage>
</organism>
<gene>
    <name evidence="1" type="primary">rplF</name>
    <name type="ordered locus">MCAP_0681</name>
</gene>